<sequence length="63" mass="7194">MKAQDLRQKSVDELNQELLGLLREQFNMRMQASTGQLAQTHTLKQVRRDVARIKTVLTEKAGA</sequence>
<protein>
    <recommendedName>
        <fullName evidence="1">Large ribosomal subunit protein uL29</fullName>
    </recommendedName>
    <alternativeName>
        <fullName evidence="2">50S ribosomal protein L29</fullName>
    </alternativeName>
</protein>
<keyword id="KW-0687">Ribonucleoprotein</keyword>
<keyword id="KW-0689">Ribosomal protein</keyword>
<dbReference type="EMBL" id="CP000644">
    <property type="protein sequence ID" value="ABO92020.1"/>
    <property type="molecule type" value="Genomic_DNA"/>
</dbReference>
<dbReference type="RefSeq" id="WP_005319733.1">
    <property type="nucleotide sequence ID" value="NC_009348.1"/>
</dbReference>
<dbReference type="SMR" id="A4SSZ8"/>
<dbReference type="STRING" id="29491.GCA_000820065_03473"/>
<dbReference type="GeneID" id="92721506"/>
<dbReference type="KEGG" id="asa:ASA_4079"/>
<dbReference type="eggNOG" id="COG0255">
    <property type="taxonomic scope" value="Bacteria"/>
</dbReference>
<dbReference type="HOGENOM" id="CLU_158491_1_2_6"/>
<dbReference type="Proteomes" id="UP000000225">
    <property type="component" value="Chromosome"/>
</dbReference>
<dbReference type="GO" id="GO:0022625">
    <property type="term" value="C:cytosolic large ribosomal subunit"/>
    <property type="evidence" value="ECO:0007669"/>
    <property type="project" value="TreeGrafter"/>
</dbReference>
<dbReference type="GO" id="GO:0003735">
    <property type="term" value="F:structural constituent of ribosome"/>
    <property type="evidence" value="ECO:0007669"/>
    <property type="project" value="InterPro"/>
</dbReference>
<dbReference type="GO" id="GO:0006412">
    <property type="term" value="P:translation"/>
    <property type="evidence" value="ECO:0007669"/>
    <property type="project" value="UniProtKB-UniRule"/>
</dbReference>
<dbReference type="CDD" id="cd00427">
    <property type="entry name" value="Ribosomal_L29_HIP"/>
    <property type="match status" value="1"/>
</dbReference>
<dbReference type="FunFam" id="1.10.287.310:FF:000001">
    <property type="entry name" value="50S ribosomal protein L29"/>
    <property type="match status" value="1"/>
</dbReference>
<dbReference type="Gene3D" id="1.10.287.310">
    <property type="match status" value="1"/>
</dbReference>
<dbReference type="HAMAP" id="MF_00374">
    <property type="entry name" value="Ribosomal_uL29"/>
    <property type="match status" value="1"/>
</dbReference>
<dbReference type="InterPro" id="IPR050063">
    <property type="entry name" value="Ribosomal_protein_uL29"/>
</dbReference>
<dbReference type="InterPro" id="IPR001854">
    <property type="entry name" value="Ribosomal_uL29"/>
</dbReference>
<dbReference type="InterPro" id="IPR018254">
    <property type="entry name" value="Ribosomal_uL29_CS"/>
</dbReference>
<dbReference type="InterPro" id="IPR036049">
    <property type="entry name" value="Ribosomal_uL29_sf"/>
</dbReference>
<dbReference type="NCBIfam" id="TIGR00012">
    <property type="entry name" value="L29"/>
    <property type="match status" value="1"/>
</dbReference>
<dbReference type="PANTHER" id="PTHR10916">
    <property type="entry name" value="60S RIBOSOMAL PROTEIN L35/50S RIBOSOMAL PROTEIN L29"/>
    <property type="match status" value="1"/>
</dbReference>
<dbReference type="PANTHER" id="PTHR10916:SF0">
    <property type="entry name" value="LARGE RIBOSOMAL SUBUNIT PROTEIN UL29C"/>
    <property type="match status" value="1"/>
</dbReference>
<dbReference type="Pfam" id="PF00831">
    <property type="entry name" value="Ribosomal_L29"/>
    <property type="match status" value="1"/>
</dbReference>
<dbReference type="SUPFAM" id="SSF46561">
    <property type="entry name" value="Ribosomal protein L29 (L29p)"/>
    <property type="match status" value="1"/>
</dbReference>
<dbReference type="PROSITE" id="PS00579">
    <property type="entry name" value="RIBOSOMAL_L29"/>
    <property type="match status" value="1"/>
</dbReference>
<feature type="chain" id="PRO_1000007412" description="Large ribosomal subunit protein uL29">
    <location>
        <begin position="1"/>
        <end position="63"/>
    </location>
</feature>
<gene>
    <name evidence="1" type="primary">rpmC</name>
    <name type="ordered locus">ASA_4079</name>
</gene>
<accession>A4SSZ8</accession>
<comment type="similarity">
    <text evidence="1">Belongs to the universal ribosomal protein uL29 family.</text>
</comment>
<name>RL29_AERS4</name>
<proteinExistence type="inferred from homology"/>
<reference key="1">
    <citation type="journal article" date="2008" name="BMC Genomics">
        <title>The genome of Aeromonas salmonicida subsp. salmonicida A449: insights into the evolution of a fish pathogen.</title>
        <authorList>
            <person name="Reith M.E."/>
            <person name="Singh R.K."/>
            <person name="Curtis B."/>
            <person name="Boyd J.M."/>
            <person name="Bouevitch A."/>
            <person name="Kimball J."/>
            <person name="Munholland J."/>
            <person name="Murphy C."/>
            <person name="Sarty D."/>
            <person name="Williams J."/>
            <person name="Nash J.H."/>
            <person name="Johnson S.C."/>
            <person name="Brown L.L."/>
        </authorList>
    </citation>
    <scope>NUCLEOTIDE SEQUENCE [LARGE SCALE GENOMIC DNA]</scope>
    <source>
        <strain>A449</strain>
    </source>
</reference>
<evidence type="ECO:0000255" key="1">
    <source>
        <dbReference type="HAMAP-Rule" id="MF_00374"/>
    </source>
</evidence>
<evidence type="ECO:0000305" key="2"/>
<organism>
    <name type="scientific">Aeromonas salmonicida (strain A449)</name>
    <dbReference type="NCBI Taxonomy" id="382245"/>
    <lineage>
        <taxon>Bacteria</taxon>
        <taxon>Pseudomonadati</taxon>
        <taxon>Pseudomonadota</taxon>
        <taxon>Gammaproteobacteria</taxon>
        <taxon>Aeromonadales</taxon>
        <taxon>Aeromonadaceae</taxon>
        <taxon>Aeromonas</taxon>
    </lineage>
</organism>